<sequence>MDCVESYLSGDNSDESPVMHTWFSPSPSPSDSSSSPSSSASSSIGRNSDDGEKSSEDGGDDAGENEVESPYKGPLEMMESLEQVLPVRKGISKYYSGKSKSFTNLTAEAASALTSSSSMKDLAKPENPYSRRRRNLLCHQIWENNKTTPRGGISKKHVMSSSRSALTLAMAVAAGVMTGEGSSSGGDSSPGSSPTTSGSPPRQLHHHQHQMKKLPPLYPRSQGSFGNLTSSQSSLGFCAWRSFSVADFPRCFPATASGIGFNDS</sequence>
<reference key="1">
    <citation type="journal article" date="2000" name="Nature">
        <title>Sequence and analysis of chromosome 5 of the plant Arabidopsis thaliana.</title>
        <authorList>
            <person name="Tabata S."/>
            <person name="Kaneko T."/>
            <person name="Nakamura Y."/>
            <person name="Kotani H."/>
            <person name="Kato T."/>
            <person name="Asamizu E."/>
            <person name="Miyajima N."/>
            <person name="Sasamoto S."/>
            <person name="Kimura T."/>
            <person name="Hosouchi T."/>
            <person name="Kawashima K."/>
            <person name="Kohara M."/>
            <person name="Matsumoto M."/>
            <person name="Matsuno A."/>
            <person name="Muraki A."/>
            <person name="Nakayama S."/>
            <person name="Nakazaki N."/>
            <person name="Naruo K."/>
            <person name="Okumura S."/>
            <person name="Shinpo S."/>
            <person name="Takeuchi C."/>
            <person name="Wada T."/>
            <person name="Watanabe A."/>
            <person name="Yamada M."/>
            <person name="Yasuda M."/>
            <person name="Sato S."/>
            <person name="de la Bastide M."/>
            <person name="Huang E."/>
            <person name="Spiegel L."/>
            <person name="Gnoj L."/>
            <person name="O'Shaughnessy A."/>
            <person name="Preston R."/>
            <person name="Habermann K."/>
            <person name="Murray J."/>
            <person name="Johnson D."/>
            <person name="Rohlfing T."/>
            <person name="Nelson J."/>
            <person name="Stoneking T."/>
            <person name="Pepin K."/>
            <person name="Spieth J."/>
            <person name="Sekhon M."/>
            <person name="Armstrong J."/>
            <person name="Becker M."/>
            <person name="Belter E."/>
            <person name="Cordum H."/>
            <person name="Cordes M."/>
            <person name="Courtney L."/>
            <person name="Courtney W."/>
            <person name="Dante M."/>
            <person name="Du H."/>
            <person name="Edwards J."/>
            <person name="Fryman J."/>
            <person name="Haakensen B."/>
            <person name="Lamar E."/>
            <person name="Latreille P."/>
            <person name="Leonard S."/>
            <person name="Meyer R."/>
            <person name="Mulvaney E."/>
            <person name="Ozersky P."/>
            <person name="Riley A."/>
            <person name="Strowmatt C."/>
            <person name="Wagner-McPherson C."/>
            <person name="Wollam A."/>
            <person name="Yoakum M."/>
            <person name="Bell M."/>
            <person name="Dedhia N."/>
            <person name="Parnell L."/>
            <person name="Shah R."/>
            <person name="Rodriguez M."/>
            <person name="Hoon See L."/>
            <person name="Vil D."/>
            <person name="Baker J."/>
            <person name="Kirchoff K."/>
            <person name="Toth K."/>
            <person name="King L."/>
            <person name="Bahret A."/>
            <person name="Miller B."/>
            <person name="Marra M.A."/>
            <person name="Martienssen R."/>
            <person name="McCombie W.R."/>
            <person name="Wilson R.K."/>
            <person name="Murphy G."/>
            <person name="Bancroft I."/>
            <person name="Volckaert G."/>
            <person name="Wambutt R."/>
            <person name="Duesterhoeft A."/>
            <person name="Stiekema W."/>
            <person name="Pohl T."/>
            <person name="Entian K.-D."/>
            <person name="Terryn N."/>
            <person name="Hartley N."/>
            <person name="Bent E."/>
            <person name="Johnson S."/>
            <person name="Langham S.-A."/>
            <person name="McCullagh B."/>
            <person name="Robben J."/>
            <person name="Grymonprez B."/>
            <person name="Zimmermann W."/>
            <person name="Ramsperger U."/>
            <person name="Wedler H."/>
            <person name="Balke K."/>
            <person name="Wedler E."/>
            <person name="Peters S."/>
            <person name="van Staveren M."/>
            <person name="Dirkse W."/>
            <person name="Mooijman P."/>
            <person name="Klein Lankhorst R."/>
            <person name="Weitzenegger T."/>
            <person name="Bothe G."/>
            <person name="Rose M."/>
            <person name="Hauf J."/>
            <person name="Berneiser S."/>
            <person name="Hempel S."/>
            <person name="Feldpausch M."/>
            <person name="Lamberth S."/>
            <person name="Villarroel R."/>
            <person name="Gielen J."/>
            <person name="Ardiles W."/>
            <person name="Bents O."/>
            <person name="Lemcke K."/>
            <person name="Kolesov G."/>
            <person name="Mayer K.F.X."/>
            <person name="Rudd S."/>
            <person name="Schoof H."/>
            <person name="Schueller C."/>
            <person name="Zaccaria P."/>
            <person name="Mewes H.-W."/>
            <person name="Bevan M."/>
            <person name="Fransz P.F."/>
        </authorList>
    </citation>
    <scope>NUCLEOTIDE SEQUENCE [LARGE SCALE GENOMIC DNA]</scope>
    <source>
        <strain>cv. Columbia</strain>
    </source>
</reference>
<reference key="2">
    <citation type="journal article" date="2017" name="Plant J.">
        <title>Araport11: a complete reannotation of the Arabidopsis thaliana reference genome.</title>
        <authorList>
            <person name="Cheng C.Y."/>
            <person name="Krishnakumar V."/>
            <person name="Chan A.P."/>
            <person name="Thibaud-Nissen F."/>
            <person name="Schobel S."/>
            <person name="Town C.D."/>
        </authorList>
    </citation>
    <scope>GENOME REANNOTATION</scope>
    <source>
        <strain>cv. Columbia</strain>
    </source>
</reference>
<reference key="3">
    <citation type="journal article" date="2003" name="Science">
        <title>Empirical analysis of transcriptional activity in the Arabidopsis genome.</title>
        <authorList>
            <person name="Yamada K."/>
            <person name="Lim J."/>
            <person name="Dale J.M."/>
            <person name="Chen H."/>
            <person name="Shinn P."/>
            <person name="Palm C.J."/>
            <person name="Southwick A.M."/>
            <person name="Wu H.C."/>
            <person name="Kim C.J."/>
            <person name="Nguyen M."/>
            <person name="Pham P.K."/>
            <person name="Cheuk R.F."/>
            <person name="Karlin-Newmann G."/>
            <person name="Liu S.X."/>
            <person name="Lam B."/>
            <person name="Sakano H."/>
            <person name="Wu T."/>
            <person name="Yu G."/>
            <person name="Miranda M."/>
            <person name="Quach H.L."/>
            <person name="Tripp M."/>
            <person name="Chang C.H."/>
            <person name="Lee J.M."/>
            <person name="Toriumi M.J."/>
            <person name="Chan M.M."/>
            <person name="Tang C.C."/>
            <person name="Onodera C.S."/>
            <person name="Deng J.M."/>
            <person name="Akiyama K."/>
            <person name="Ansari Y."/>
            <person name="Arakawa T."/>
            <person name="Banh J."/>
            <person name="Banno F."/>
            <person name="Bowser L."/>
            <person name="Brooks S.Y."/>
            <person name="Carninci P."/>
            <person name="Chao Q."/>
            <person name="Choy N."/>
            <person name="Enju A."/>
            <person name="Goldsmith A.D."/>
            <person name="Gurjal M."/>
            <person name="Hansen N.F."/>
            <person name="Hayashizaki Y."/>
            <person name="Johnson-Hopson C."/>
            <person name="Hsuan V.W."/>
            <person name="Iida K."/>
            <person name="Karnes M."/>
            <person name="Khan S."/>
            <person name="Koesema E."/>
            <person name="Ishida J."/>
            <person name="Jiang P.X."/>
            <person name="Jones T."/>
            <person name="Kawai J."/>
            <person name="Kamiya A."/>
            <person name="Meyers C."/>
            <person name="Nakajima M."/>
            <person name="Narusaka M."/>
            <person name="Seki M."/>
            <person name="Sakurai T."/>
            <person name="Satou M."/>
            <person name="Tamse R."/>
            <person name="Vaysberg M."/>
            <person name="Wallender E.K."/>
            <person name="Wong C."/>
            <person name="Yamamura Y."/>
            <person name="Yuan S."/>
            <person name="Shinozaki K."/>
            <person name="Davis R.W."/>
            <person name="Theologis A."/>
            <person name="Ecker J.R."/>
        </authorList>
    </citation>
    <scope>NUCLEOTIDE SEQUENCE [LARGE SCALE MRNA]</scope>
    <source>
        <strain>cv. Columbia</strain>
    </source>
</reference>
<reference key="4">
    <citation type="journal article" date="2002" name="Science">
        <title>Functional annotation of a full-length Arabidopsis cDNA collection.</title>
        <authorList>
            <person name="Seki M."/>
            <person name="Narusaka M."/>
            <person name="Kamiya A."/>
            <person name="Ishida J."/>
            <person name="Satou M."/>
            <person name="Sakurai T."/>
            <person name="Nakajima M."/>
            <person name="Enju A."/>
            <person name="Akiyama K."/>
            <person name="Oono Y."/>
            <person name="Muramatsu M."/>
            <person name="Hayashizaki Y."/>
            <person name="Kawai J."/>
            <person name="Carninci P."/>
            <person name="Itoh M."/>
            <person name="Ishii Y."/>
            <person name="Arakawa T."/>
            <person name="Shibata K."/>
            <person name="Shinagawa A."/>
            <person name="Shinozaki K."/>
        </authorList>
    </citation>
    <scope>NUCLEOTIDE SEQUENCE [LARGE SCALE MRNA] OF 161-264</scope>
    <source>
        <strain>cv. Columbia</strain>
    </source>
</reference>
<reference key="5">
    <citation type="journal article" date="2009" name="Plant J.">
        <title>OXIDATIVE STRESS 3 is a chromatin-associated factor involved in tolerance to heavy metals and oxidative stress.</title>
        <authorList>
            <person name="Blanvillain R."/>
            <person name="Kim J.H."/>
            <person name="Wu S."/>
            <person name="Lima A."/>
            <person name="Ow D.W."/>
        </authorList>
    </citation>
    <scope>FUNCTION</scope>
    <scope>GENE FAMILY</scope>
    <scope>NOMENCLATURE</scope>
    <source>
        <strain>cv. Landsberg erecta</strain>
        <strain>cv. Wassilewskija</strain>
    </source>
</reference>
<reference key="6">
    <citation type="journal article" date="2009" name="Plant Physiol.">
        <title>Large-scale Arabidopsis phosphoproteome profiling reveals novel chloroplast kinase substrates and phosphorylation networks.</title>
        <authorList>
            <person name="Reiland S."/>
            <person name="Messerli G."/>
            <person name="Baerenfaller K."/>
            <person name="Gerrits B."/>
            <person name="Endler A."/>
            <person name="Grossmann J."/>
            <person name="Gruissem W."/>
            <person name="Baginsky S."/>
        </authorList>
    </citation>
    <scope>IDENTIFICATION BY MASS SPECTROMETRY [LARGE SCALE ANALYSIS]</scope>
</reference>
<dbReference type="EMBL" id="AC140977">
    <property type="protein sequence ID" value="AAO73902.1"/>
    <property type="molecule type" value="Genomic_DNA"/>
</dbReference>
<dbReference type="EMBL" id="AL589883">
    <property type="protein sequence ID" value="CAC34487.1"/>
    <property type="molecule type" value="Genomic_DNA"/>
</dbReference>
<dbReference type="EMBL" id="CP002688">
    <property type="protein sequence ID" value="AED92959.1"/>
    <property type="molecule type" value="Genomic_DNA"/>
</dbReference>
<dbReference type="EMBL" id="AY136480">
    <property type="protein sequence ID" value="AAM97145.1"/>
    <property type="molecule type" value="mRNA"/>
</dbReference>
<dbReference type="EMBL" id="BT006300">
    <property type="protein sequence ID" value="AAP13408.1"/>
    <property type="molecule type" value="mRNA"/>
</dbReference>
<dbReference type="EMBL" id="AK118367">
    <property type="protein sequence ID" value="BAC42981.1"/>
    <property type="status" value="ALT_INIT"/>
    <property type="molecule type" value="mRNA"/>
</dbReference>
<dbReference type="RefSeq" id="NP_680182.1">
    <property type="nucleotide sequence ID" value="NM_147877.4"/>
</dbReference>
<dbReference type="FunCoup" id="Q9C593">
    <property type="interactions" value="38"/>
</dbReference>
<dbReference type="IntAct" id="Q9C593">
    <property type="interactions" value="5"/>
</dbReference>
<dbReference type="STRING" id="3702.Q9C593"/>
<dbReference type="iPTMnet" id="Q9C593"/>
<dbReference type="PaxDb" id="3702-AT5G21940.1"/>
<dbReference type="ProteomicsDB" id="179805"/>
<dbReference type="EnsemblPlants" id="AT5G21940.1">
    <property type="protein sequence ID" value="AT5G21940.1"/>
    <property type="gene ID" value="AT5G21940"/>
</dbReference>
<dbReference type="GeneID" id="832254"/>
<dbReference type="Gramene" id="AT5G21940.1">
    <property type="protein sequence ID" value="AT5G21940.1"/>
    <property type="gene ID" value="AT5G21940"/>
</dbReference>
<dbReference type="KEGG" id="ath:AT5G21940"/>
<dbReference type="Araport" id="AT5G21940"/>
<dbReference type="TAIR" id="AT5G21940"/>
<dbReference type="eggNOG" id="KOG4210">
    <property type="taxonomic scope" value="Eukaryota"/>
</dbReference>
<dbReference type="HOGENOM" id="CLU_066544_3_0_1"/>
<dbReference type="InParanoid" id="Q9C593"/>
<dbReference type="OMA" id="DHQIERP"/>
<dbReference type="OrthoDB" id="691484at2759"/>
<dbReference type="PhylomeDB" id="Q9C593"/>
<dbReference type="PRO" id="PR:Q9C593"/>
<dbReference type="Proteomes" id="UP000006548">
    <property type="component" value="Chromosome 5"/>
</dbReference>
<dbReference type="ExpressionAtlas" id="Q9C593">
    <property type="expression patterns" value="baseline and differential"/>
</dbReference>
<dbReference type="GO" id="GO:0005634">
    <property type="term" value="C:nucleus"/>
    <property type="evidence" value="ECO:0007669"/>
    <property type="project" value="UniProtKB-SubCell"/>
</dbReference>
<dbReference type="GO" id="GO:0016301">
    <property type="term" value="F:kinase activity"/>
    <property type="evidence" value="ECO:0007669"/>
    <property type="project" value="UniProtKB-KW"/>
</dbReference>
<dbReference type="GO" id="GO:0006979">
    <property type="term" value="P:response to oxidative stress"/>
    <property type="evidence" value="ECO:0000315"/>
    <property type="project" value="UniProtKB"/>
</dbReference>
<dbReference type="GO" id="GO:0010043">
    <property type="term" value="P:response to zinc ion"/>
    <property type="evidence" value="ECO:0000315"/>
    <property type="project" value="UniProtKB"/>
</dbReference>
<dbReference type="InterPro" id="IPR051992">
    <property type="entry name" value="OxStress_Response_Reg"/>
</dbReference>
<dbReference type="PANTHER" id="PTHR33172">
    <property type="entry name" value="OS08G0516900 PROTEIN"/>
    <property type="match status" value="1"/>
</dbReference>
<dbReference type="PANTHER" id="PTHR33172:SF37">
    <property type="entry name" value="PROTEIN OXIDATIVE STRESS 3 LIKE 1"/>
    <property type="match status" value="1"/>
</dbReference>
<keyword id="KW-0418">Kinase</keyword>
<keyword id="KW-0539">Nucleus</keyword>
<keyword id="KW-1185">Reference proteome</keyword>
<keyword id="KW-0346">Stress response</keyword>
<keyword id="KW-0808">Transferase</keyword>
<feature type="chain" id="PRO_0000455032" description="Protein OXIDATIVE STRESS 3 LIKE 1">
    <location>
        <begin position="1"/>
        <end position="264"/>
    </location>
</feature>
<feature type="region of interest" description="Disordered" evidence="2">
    <location>
        <begin position="1"/>
        <end position="76"/>
    </location>
</feature>
<feature type="region of interest" description="Disordered" evidence="2">
    <location>
        <begin position="178"/>
        <end position="225"/>
    </location>
</feature>
<feature type="compositionally biased region" description="Low complexity" evidence="2">
    <location>
        <begin position="29"/>
        <end position="43"/>
    </location>
</feature>
<feature type="compositionally biased region" description="Basic and acidic residues" evidence="2">
    <location>
        <begin position="47"/>
        <end position="56"/>
    </location>
</feature>
<feature type="compositionally biased region" description="Acidic residues" evidence="2">
    <location>
        <begin position="57"/>
        <end position="67"/>
    </location>
</feature>
<feature type="compositionally biased region" description="Low complexity" evidence="2">
    <location>
        <begin position="179"/>
        <end position="201"/>
    </location>
</feature>
<feature type="compositionally biased region" description="Basic residues" evidence="2">
    <location>
        <begin position="203"/>
        <end position="212"/>
    </location>
</feature>
<gene>
    <name evidence="4" type="primary">O3L1</name>
    <name evidence="7" type="ordered locus">At5g21940</name>
    <name evidence="6" type="ORF">F13M11</name>
    <name evidence="8" type="ORF">T6G21.50</name>
</gene>
<comment type="function">
    <text evidence="3">Promotes slightly the tolerance to zinc (Zn) and to oxidizing chemicals (e.g. diamide).</text>
</comment>
<comment type="interaction">
    <interactant intactId="EBI-2213247">
        <id>Q9C593</id>
    </interactant>
    <interactant intactId="EBI-979475">
        <id>Q38869</id>
        <label>CPK4</label>
    </interactant>
    <organismsDiffer>false</organismsDiffer>
    <experiments>3</experiments>
</comment>
<comment type="subcellular location">
    <subcellularLocation>
        <location evidence="1">Nucleus</location>
    </subcellularLocation>
</comment>
<comment type="sequence caution" evidence="5">
    <conflict type="erroneous initiation">
        <sequence resource="EMBL-CDS" id="BAC42981"/>
    </conflict>
    <text>Truncated N-terminus.</text>
</comment>
<organism>
    <name type="scientific">Arabidopsis thaliana</name>
    <name type="common">Mouse-ear cress</name>
    <dbReference type="NCBI Taxonomy" id="3702"/>
    <lineage>
        <taxon>Eukaryota</taxon>
        <taxon>Viridiplantae</taxon>
        <taxon>Streptophyta</taxon>
        <taxon>Embryophyta</taxon>
        <taxon>Tracheophyta</taxon>
        <taxon>Spermatophyta</taxon>
        <taxon>Magnoliopsida</taxon>
        <taxon>eudicotyledons</taxon>
        <taxon>Gunneridae</taxon>
        <taxon>Pentapetalae</taxon>
        <taxon>rosids</taxon>
        <taxon>malvids</taxon>
        <taxon>Brassicales</taxon>
        <taxon>Brassicaceae</taxon>
        <taxon>Camelineae</taxon>
        <taxon>Arabidopsis</taxon>
    </lineage>
</organism>
<evidence type="ECO:0000250" key="1">
    <source>
        <dbReference type="UniProtKB" id="Q9LVB9"/>
    </source>
</evidence>
<evidence type="ECO:0000256" key="2">
    <source>
        <dbReference type="SAM" id="MobiDB-lite"/>
    </source>
</evidence>
<evidence type="ECO:0000269" key="3">
    <source>
    </source>
</evidence>
<evidence type="ECO:0000303" key="4">
    <source>
    </source>
</evidence>
<evidence type="ECO:0000305" key="5"/>
<evidence type="ECO:0000312" key="6">
    <source>
        <dbReference type="EMBL" id="AAO73902.1"/>
    </source>
</evidence>
<evidence type="ECO:0000312" key="7">
    <source>
        <dbReference type="EMBL" id="AED92959.1"/>
    </source>
</evidence>
<evidence type="ECO:0000312" key="8">
    <source>
        <dbReference type="EMBL" id="CAC34487.1"/>
    </source>
</evidence>
<protein>
    <recommendedName>
        <fullName evidence="4">Protein OXIDATIVE STRESS 3 LIKE 1</fullName>
        <shortName evidence="4">AtO3L1</shortName>
    </recommendedName>
</protein>
<proteinExistence type="evidence at protein level"/>
<accession>Q9C593</accession>
<accession>Q8GX89</accession>
<name>O3L1_ARATH</name>